<proteinExistence type="evidence at protein level"/>
<feature type="chain" id="PRO_0000410706" description="Troponin I">
    <location>
        <begin position="1" status="less than"/>
        <end position="15" status="greater than"/>
    </location>
</feature>
<feature type="non-consecutive residues" evidence="4">
    <location>
        <begin position="8"/>
        <end position="9"/>
    </location>
</feature>
<feature type="non-terminal residue" evidence="4">
    <location>
        <position position="1"/>
    </location>
</feature>
<feature type="non-terminal residue" evidence="4">
    <location>
        <position position="15"/>
    </location>
</feature>
<sequence length="15" mass="1801">KGFMTPERAAEFNFR</sequence>
<name>TNNI_CHIOP</name>
<organism>
    <name type="scientific">Chionoecetes opilio</name>
    <name type="common">Atlantic snow crab</name>
    <name type="synonym">Cancer opilio</name>
    <dbReference type="NCBI Taxonomy" id="41210"/>
    <lineage>
        <taxon>Eukaryota</taxon>
        <taxon>Metazoa</taxon>
        <taxon>Ecdysozoa</taxon>
        <taxon>Arthropoda</taxon>
        <taxon>Crustacea</taxon>
        <taxon>Multicrustacea</taxon>
        <taxon>Malacostraca</taxon>
        <taxon>Eumalacostraca</taxon>
        <taxon>Eucarida</taxon>
        <taxon>Decapoda</taxon>
        <taxon>Pleocyemata</taxon>
        <taxon>Brachyura</taxon>
        <taxon>Eubrachyura</taxon>
        <taxon>Majoidea</taxon>
        <taxon>Majidae</taxon>
        <taxon>Chionoecetes</taxon>
    </lineage>
</organism>
<comment type="function">
    <text evidence="1">Troponin I is the inhibitory subunit of troponin, the thin filament regulatory complex which confers calcium-sensitivity to striated muscle actomyosin ATPase activity.</text>
</comment>
<comment type="allergen">
    <text evidence="3 4">Causes an allergic reaction in human. Binds to IgE.</text>
</comment>
<comment type="similarity">
    <text evidence="2">Belongs to the troponin I family.</text>
</comment>
<protein>
    <recommendedName>
        <fullName evidence="4">Troponin I</fullName>
    </recommendedName>
</protein>
<accession>P86910</accession>
<keyword id="KW-0020">Allergen</keyword>
<keyword id="KW-0903">Direct protein sequencing</keyword>
<keyword id="KW-0514">Muscle protein</keyword>
<evidence type="ECO:0000250" key="1">
    <source>
        <dbReference type="UniProtKB" id="Q7M3Y3"/>
    </source>
</evidence>
<evidence type="ECO:0000255" key="2"/>
<evidence type="ECO:0000269" key="3">
    <source>
    </source>
</evidence>
<evidence type="ECO:0000303" key="4">
    <source>
    </source>
</evidence>
<evidence type="ECO:0000305" key="5"/>
<reference evidence="5" key="1">
    <citation type="journal article" date="2011" name="J. Proteomics">
        <title>Biomolecular characterization of allergenic proteins in snow crab (Chionoecetes opilio) and de novo sequencing of the second allergen arginine kinase using tandem mass spectrometry.</title>
        <authorList>
            <person name="Abdel Rahman A.M."/>
            <person name="Kamath S.D."/>
            <person name="Lopata A.L."/>
            <person name="Robinson J.J."/>
            <person name="Helleur R.J."/>
        </authorList>
    </citation>
    <scope>PROTEIN SEQUENCE</scope>
    <scope>IGE-BINDING</scope>
    <source>
        <tissue evidence="3">Muscle</tissue>
    </source>
</reference>